<dbReference type="EMBL" id="AC025808">
    <property type="protein sequence ID" value="AAF79430.1"/>
    <property type="status" value="ALT_SEQ"/>
    <property type="molecule type" value="Genomic_DNA"/>
</dbReference>
<dbReference type="EMBL" id="CP002684">
    <property type="protein sequence ID" value="AEE29854.1"/>
    <property type="molecule type" value="Genomic_DNA"/>
</dbReference>
<dbReference type="RefSeq" id="NP_173378.1">
    <property type="nucleotide sequence ID" value="NM_101802.1"/>
</dbReference>
<dbReference type="SMR" id="Q3ED93"/>
<dbReference type="PaxDb" id="3702-AT1G19460.1"/>
<dbReference type="EnsemblPlants" id="AT1G19460.1">
    <property type="protein sequence ID" value="AT1G19460.1"/>
    <property type="gene ID" value="AT1G19460"/>
</dbReference>
<dbReference type="GeneID" id="838530"/>
<dbReference type="Gramene" id="AT1G19460.1">
    <property type="protein sequence ID" value="AT1G19460.1"/>
    <property type="gene ID" value="AT1G19460"/>
</dbReference>
<dbReference type="KEGG" id="ath:AT1G19460"/>
<dbReference type="Araport" id="AT1G19460"/>
<dbReference type="TAIR" id="AT1G19460"/>
<dbReference type="eggNOG" id="KOG1072">
    <property type="taxonomic scope" value="Eukaryota"/>
</dbReference>
<dbReference type="HOGENOM" id="CLU_032521_1_1_1"/>
<dbReference type="InParanoid" id="Q3ED93"/>
<dbReference type="OMA" id="WENQAGS"/>
<dbReference type="PhylomeDB" id="Q3ED93"/>
<dbReference type="PRO" id="PR:Q3ED93"/>
<dbReference type="Proteomes" id="UP000006548">
    <property type="component" value="Chromosome 1"/>
</dbReference>
<dbReference type="ExpressionAtlas" id="Q3ED93">
    <property type="expression patterns" value="baseline and differential"/>
</dbReference>
<dbReference type="Gene3D" id="2.120.10.80">
    <property type="entry name" value="Kelch-type beta propeller"/>
    <property type="match status" value="1"/>
</dbReference>
<dbReference type="InterPro" id="IPR050354">
    <property type="entry name" value="F-box/kelch-repeat_ARATH"/>
</dbReference>
<dbReference type="InterPro" id="IPR015915">
    <property type="entry name" value="Kelch-typ_b-propeller"/>
</dbReference>
<dbReference type="InterPro" id="IPR006652">
    <property type="entry name" value="Kelch_1"/>
</dbReference>
<dbReference type="PANTHER" id="PTHR24414:SF65">
    <property type="entry name" value="F-BOX DOMAIN-CONTAINING PROTEIN"/>
    <property type="match status" value="1"/>
</dbReference>
<dbReference type="PANTHER" id="PTHR24414">
    <property type="entry name" value="F-BOX/KELCH-REPEAT PROTEIN SKIP4"/>
    <property type="match status" value="1"/>
</dbReference>
<dbReference type="Pfam" id="PF25210">
    <property type="entry name" value="Kelch_FKB95"/>
    <property type="match status" value="1"/>
</dbReference>
<dbReference type="SMART" id="SM00612">
    <property type="entry name" value="Kelch"/>
    <property type="match status" value="2"/>
</dbReference>
<dbReference type="SUPFAM" id="SSF117281">
    <property type="entry name" value="Kelch motif"/>
    <property type="match status" value="1"/>
</dbReference>
<proteinExistence type="predicted"/>
<reference key="1">
    <citation type="journal article" date="2000" name="Nature">
        <title>Sequence and analysis of chromosome 1 of the plant Arabidopsis thaliana.</title>
        <authorList>
            <person name="Theologis A."/>
            <person name="Ecker J.R."/>
            <person name="Palm C.J."/>
            <person name="Federspiel N.A."/>
            <person name="Kaul S."/>
            <person name="White O."/>
            <person name="Alonso J."/>
            <person name="Altafi H."/>
            <person name="Araujo R."/>
            <person name="Bowman C.L."/>
            <person name="Brooks S.Y."/>
            <person name="Buehler E."/>
            <person name="Chan A."/>
            <person name="Chao Q."/>
            <person name="Chen H."/>
            <person name="Cheuk R.F."/>
            <person name="Chin C.W."/>
            <person name="Chung M.K."/>
            <person name="Conn L."/>
            <person name="Conway A.B."/>
            <person name="Conway A.R."/>
            <person name="Creasy T.H."/>
            <person name="Dewar K."/>
            <person name="Dunn P."/>
            <person name="Etgu P."/>
            <person name="Feldblyum T.V."/>
            <person name="Feng J.-D."/>
            <person name="Fong B."/>
            <person name="Fujii C.Y."/>
            <person name="Gill J.E."/>
            <person name="Goldsmith A.D."/>
            <person name="Haas B."/>
            <person name="Hansen N.F."/>
            <person name="Hughes B."/>
            <person name="Huizar L."/>
            <person name="Hunter J.L."/>
            <person name="Jenkins J."/>
            <person name="Johnson-Hopson C."/>
            <person name="Khan S."/>
            <person name="Khaykin E."/>
            <person name="Kim C.J."/>
            <person name="Koo H.L."/>
            <person name="Kremenetskaia I."/>
            <person name="Kurtz D.B."/>
            <person name="Kwan A."/>
            <person name="Lam B."/>
            <person name="Langin-Hooper S."/>
            <person name="Lee A."/>
            <person name="Lee J.M."/>
            <person name="Lenz C.A."/>
            <person name="Li J.H."/>
            <person name="Li Y.-P."/>
            <person name="Lin X."/>
            <person name="Liu S.X."/>
            <person name="Liu Z.A."/>
            <person name="Luros J.S."/>
            <person name="Maiti R."/>
            <person name="Marziali A."/>
            <person name="Militscher J."/>
            <person name="Miranda M."/>
            <person name="Nguyen M."/>
            <person name="Nierman W.C."/>
            <person name="Osborne B.I."/>
            <person name="Pai G."/>
            <person name="Peterson J."/>
            <person name="Pham P.K."/>
            <person name="Rizzo M."/>
            <person name="Rooney T."/>
            <person name="Rowley D."/>
            <person name="Sakano H."/>
            <person name="Salzberg S.L."/>
            <person name="Schwartz J.R."/>
            <person name="Shinn P."/>
            <person name="Southwick A.M."/>
            <person name="Sun H."/>
            <person name="Tallon L.J."/>
            <person name="Tambunga G."/>
            <person name="Toriumi M.J."/>
            <person name="Town C.D."/>
            <person name="Utterback T."/>
            <person name="Van Aken S."/>
            <person name="Vaysberg M."/>
            <person name="Vysotskaia V.S."/>
            <person name="Walker M."/>
            <person name="Wu D."/>
            <person name="Yu G."/>
            <person name="Fraser C.M."/>
            <person name="Venter J.C."/>
            <person name="Davis R.W."/>
        </authorList>
    </citation>
    <scope>NUCLEOTIDE SEQUENCE [LARGE SCALE GENOMIC DNA]</scope>
    <source>
        <strain>cv. Columbia</strain>
    </source>
</reference>
<reference key="2">
    <citation type="journal article" date="2017" name="Plant J.">
        <title>Araport11: a complete reannotation of the Arabidopsis thaliana reference genome.</title>
        <authorList>
            <person name="Cheng C.Y."/>
            <person name="Krishnakumar V."/>
            <person name="Chan A.P."/>
            <person name="Thibaud-Nissen F."/>
            <person name="Schobel S."/>
            <person name="Town C.D."/>
        </authorList>
    </citation>
    <scope>GENOME REANNOTATION</scope>
    <source>
        <strain>cv. Columbia</strain>
    </source>
</reference>
<feature type="chain" id="PRO_0000274925" description="Kelch repeat-containing protein At1g19460">
    <location>
        <begin position="1"/>
        <end position="416"/>
    </location>
</feature>
<feature type="repeat" description="Kelch 1">
    <location>
        <begin position="156"/>
        <end position="202"/>
    </location>
</feature>
<feature type="repeat" description="Kelch 2">
    <location>
        <begin position="203"/>
        <end position="250"/>
    </location>
</feature>
<feature type="repeat" description="Kelch 3">
    <location>
        <begin position="255"/>
        <end position="293"/>
    </location>
</feature>
<feature type="repeat" description="Kelch 4">
    <location>
        <begin position="294"/>
        <end position="344"/>
    </location>
</feature>
<feature type="region of interest" description="Disordered" evidence="1">
    <location>
        <begin position="1"/>
        <end position="55"/>
    </location>
</feature>
<feature type="compositionally biased region" description="Polar residues" evidence="1">
    <location>
        <begin position="1"/>
        <end position="11"/>
    </location>
</feature>
<feature type="compositionally biased region" description="Basic and acidic residues" evidence="1">
    <location>
        <begin position="16"/>
        <end position="26"/>
    </location>
</feature>
<feature type="compositionally biased region" description="Basic and acidic residues" evidence="1">
    <location>
        <begin position="38"/>
        <end position="52"/>
    </location>
</feature>
<accession>Q3ED93</accession>
<accession>Q9LN46</accession>
<sequence length="416" mass="47185">MANISEISGDSNDGGDPNKKPEEQVLRRSRRIATRNENQNKKPKEEEEKDNRSVSFPIPNELTEACVALIRKCDYPSLSSVSSYFFNLIASSELYETRSRLGLSETFLYAAIRFPDTNPPNWYILHRNKVSSLRLSKLESLPPVPYGCSVVTIGQEMYVIGGLLDVRRLQLMTLIDCRTHKCRSLPKMKRGRYHAAAGVFDGKIYVIGGFRMRKPDAEWIEVFDLKKQIWESLPGPYPKTSMDSQFFAHAVMEDKLYILGSRCLIYEPKRNGEWDATVNANPIWNLWKVPCTMQCVIDDMLYTIDPQCTLGHPIVVYNPKDKTWRPVKGESLRTLPSYFVSDGSEMANFGGKLVILGSNGSCYDTGDCIGEKGIWCVMIELEKREGGEIWGKVESLDCVLGDINFLSVWLCQTLTL</sequence>
<gene>
    <name type="ordered locus">At1g19460</name>
    <name type="ORF">F18O14.24</name>
</gene>
<organism>
    <name type="scientific">Arabidopsis thaliana</name>
    <name type="common">Mouse-ear cress</name>
    <dbReference type="NCBI Taxonomy" id="3702"/>
    <lineage>
        <taxon>Eukaryota</taxon>
        <taxon>Viridiplantae</taxon>
        <taxon>Streptophyta</taxon>
        <taxon>Embryophyta</taxon>
        <taxon>Tracheophyta</taxon>
        <taxon>Spermatophyta</taxon>
        <taxon>Magnoliopsida</taxon>
        <taxon>eudicotyledons</taxon>
        <taxon>Gunneridae</taxon>
        <taxon>Pentapetalae</taxon>
        <taxon>rosids</taxon>
        <taxon>malvids</taxon>
        <taxon>Brassicales</taxon>
        <taxon>Brassicaceae</taxon>
        <taxon>Camelineae</taxon>
        <taxon>Arabidopsis</taxon>
    </lineage>
</organism>
<protein>
    <recommendedName>
        <fullName>Kelch repeat-containing protein At1g19460</fullName>
    </recommendedName>
</protein>
<name>Y1946_ARATH</name>
<comment type="sequence caution" evidence="2">
    <conflict type="erroneous gene model prediction">
        <sequence resource="EMBL-CDS" id="AAF79430"/>
    </conflict>
    <text>The predicted gene At1g19460 has been split into 2 genes: At1g19460 and At1g19470.</text>
</comment>
<evidence type="ECO:0000256" key="1">
    <source>
        <dbReference type="SAM" id="MobiDB-lite"/>
    </source>
</evidence>
<evidence type="ECO:0000305" key="2"/>
<keyword id="KW-0880">Kelch repeat</keyword>
<keyword id="KW-1185">Reference proteome</keyword>
<keyword id="KW-0677">Repeat</keyword>